<evidence type="ECO:0000250" key="1"/>
<evidence type="ECO:0000250" key="2">
    <source>
        <dbReference type="UniProtKB" id="Q9UN30"/>
    </source>
</evidence>
<evidence type="ECO:0000255" key="3">
    <source>
        <dbReference type="PROSITE-ProRule" id="PRU00184"/>
    </source>
</evidence>
<evidence type="ECO:0000305" key="4"/>
<organism>
    <name type="scientific">Hoolock hoolock</name>
    <name type="common">Western hoolock gibbon</name>
    <name type="synonym">Bunopithecus hoolock</name>
    <dbReference type="NCBI Taxonomy" id="61851"/>
    <lineage>
        <taxon>Eukaryota</taxon>
        <taxon>Metazoa</taxon>
        <taxon>Chordata</taxon>
        <taxon>Craniata</taxon>
        <taxon>Vertebrata</taxon>
        <taxon>Euteleostomi</taxon>
        <taxon>Mammalia</taxon>
        <taxon>Eutheria</taxon>
        <taxon>Euarchontoglires</taxon>
        <taxon>Primates</taxon>
        <taxon>Haplorrhini</taxon>
        <taxon>Catarrhini</taxon>
        <taxon>Hylobatidae</taxon>
        <taxon>Hoolock</taxon>
    </lineage>
</organism>
<protein>
    <recommendedName>
        <fullName>Sex comb on midleg-like protein 1</fullName>
    </recommendedName>
</protein>
<keyword id="KW-0539">Nucleus</keyword>
<keyword id="KW-0597">Phosphoprotein</keyword>
<keyword id="KW-0678">Repressor</keyword>
<keyword id="KW-0804">Transcription</keyword>
<keyword id="KW-0805">Transcription regulation</keyword>
<comment type="function">
    <text evidence="1">Putative Polycomb group (PcG) protein. PcG proteins act by forming multiprotein complexes, which are required to maintain the transcriptionally repressive state of homeotic genes throughout development. May be involved in spermatogenesis during sexual maturation (By similarity).</text>
</comment>
<comment type="subcellular location">
    <subcellularLocation>
        <location evidence="4">Nucleus</location>
    </subcellularLocation>
</comment>
<comment type="similarity">
    <text evidence="4">Belongs to the SCM family.</text>
</comment>
<name>SCML1_HOOHO</name>
<dbReference type="EMBL" id="EU370785">
    <property type="protein sequence ID" value="ABY68580.1"/>
    <property type="molecule type" value="Genomic_DNA"/>
</dbReference>
<dbReference type="SMR" id="B0FZP1"/>
<dbReference type="GO" id="GO:0005634">
    <property type="term" value="C:nucleus"/>
    <property type="evidence" value="ECO:0007669"/>
    <property type="project" value="UniProtKB-SubCell"/>
</dbReference>
<dbReference type="CDD" id="cd09578">
    <property type="entry name" value="SAM_Scm"/>
    <property type="match status" value="1"/>
</dbReference>
<dbReference type="FunFam" id="1.10.150.50:FF:000018">
    <property type="entry name" value="Polycomb protein scmh1 isoform 4"/>
    <property type="match status" value="1"/>
</dbReference>
<dbReference type="Gene3D" id="1.10.150.50">
    <property type="entry name" value="Transcription Factor, Ets-1"/>
    <property type="match status" value="1"/>
</dbReference>
<dbReference type="InterPro" id="IPR001660">
    <property type="entry name" value="SAM"/>
</dbReference>
<dbReference type="InterPro" id="IPR013761">
    <property type="entry name" value="SAM/pointed_sf"/>
</dbReference>
<dbReference type="InterPro" id="IPR047531">
    <property type="entry name" value="SAM_Scm-like"/>
</dbReference>
<dbReference type="PANTHER" id="PTHR47305">
    <property type="entry name" value="BEN DOMAIN-CONTAINING PROTEIN 2"/>
    <property type="match status" value="1"/>
</dbReference>
<dbReference type="PANTHER" id="PTHR47305:SF2">
    <property type="entry name" value="SAM DOMAIN-CONTAINING PROTEIN"/>
    <property type="match status" value="1"/>
</dbReference>
<dbReference type="Pfam" id="PF00536">
    <property type="entry name" value="SAM_1"/>
    <property type="match status" value="1"/>
</dbReference>
<dbReference type="SMART" id="SM00454">
    <property type="entry name" value="SAM"/>
    <property type="match status" value="1"/>
</dbReference>
<dbReference type="SUPFAM" id="SSF47769">
    <property type="entry name" value="SAM/Pointed domain"/>
    <property type="match status" value="1"/>
</dbReference>
<dbReference type="PROSITE" id="PS50105">
    <property type="entry name" value="SAM_DOMAIN"/>
    <property type="match status" value="1"/>
</dbReference>
<reference key="1">
    <citation type="journal article" date="2008" name="BMC Evol. Biol.">
        <title>Adaptive evolution of SCML1 in primates, a gene involved in male reproduction.</title>
        <authorList>
            <person name="Wu H.-H."/>
            <person name="Su B."/>
        </authorList>
    </citation>
    <scope>NUCLEOTIDE SEQUENCE [GENOMIC DNA]</scope>
</reference>
<proteinExistence type="inferred from homology"/>
<accession>B0FZP1</accession>
<gene>
    <name type="primary">SCML1</name>
</gene>
<sequence>MMSSSSSEIDVVKTRIPTYDEDDNTVLYAYETKPEFVNKEPNIVSDVSCNTEEQQKTVNDVLIHCQVIYDAMQNLDKKIDVIRRKVSKIQRFYVKSLWTNRKRYGYKKYSYRLAKKLKLKKMKKNEVYESFSYPESYSPTLPVSRCENNSPSNFPRPSFCMEEYRRAEPEEDPILSRTPSPVHPSDFSEHNYQPYYASDGATYGSSSGTCRGNPRADGIHNTYSTDHASAAPPSVARSPFENDRYIEEGSITKHPSTWSVEAVVLFLKQTDPLALCPLIDLFRSHEIDGKALLLLTSDVLLKHLGVKLGTAVKLCYYIDRLKQGKCFEN</sequence>
<feature type="chain" id="PRO_0000380547" description="Sex comb on midleg-like protein 1">
    <location>
        <begin position="1"/>
        <end position="329"/>
    </location>
</feature>
<feature type="domain" description="SAM" evidence="3">
    <location>
        <begin position="258"/>
        <end position="325"/>
    </location>
</feature>
<feature type="modified residue" description="Phosphoserine" evidence="2">
    <location>
        <position position="138"/>
    </location>
</feature>
<feature type="modified residue" description="Phosphoserine" evidence="2">
    <location>
        <position position="238"/>
    </location>
</feature>